<name>YNFB_SALPK</name>
<dbReference type="EMBL" id="FM200053">
    <property type="protein sequence ID" value="CAR59426.1"/>
    <property type="molecule type" value="Genomic_DNA"/>
</dbReference>
<dbReference type="RefSeq" id="WP_001066440.1">
    <property type="nucleotide sequence ID" value="NC_011147.1"/>
</dbReference>
<dbReference type="KEGG" id="sek:SSPA1257"/>
<dbReference type="HOGENOM" id="CLU_167574_0_0_6"/>
<dbReference type="Proteomes" id="UP000001869">
    <property type="component" value="Chromosome"/>
</dbReference>
<dbReference type="HAMAP" id="MF_01581">
    <property type="entry name" value="UPF0482"/>
    <property type="match status" value="1"/>
</dbReference>
<dbReference type="InterPro" id="IPR009700">
    <property type="entry name" value="DUF1283"/>
</dbReference>
<dbReference type="NCBIfam" id="NF010180">
    <property type="entry name" value="PRK13659.1"/>
    <property type="match status" value="1"/>
</dbReference>
<dbReference type="Pfam" id="PF06932">
    <property type="entry name" value="DUF1283"/>
    <property type="match status" value="1"/>
</dbReference>
<proteinExistence type="inferred from homology"/>
<organism>
    <name type="scientific">Salmonella paratyphi A (strain AKU_12601)</name>
    <dbReference type="NCBI Taxonomy" id="554290"/>
    <lineage>
        <taxon>Bacteria</taxon>
        <taxon>Pseudomonadati</taxon>
        <taxon>Pseudomonadota</taxon>
        <taxon>Gammaproteobacteria</taxon>
        <taxon>Enterobacterales</taxon>
        <taxon>Enterobacteriaceae</taxon>
        <taxon>Salmonella</taxon>
    </lineage>
</organism>
<protein>
    <recommendedName>
        <fullName evidence="1">UPF0482 protein YnfB</fullName>
    </recommendedName>
</protein>
<feature type="signal peptide" evidence="1">
    <location>
        <begin position="1"/>
        <end position="28"/>
    </location>
</feature>
<feature type="chain" id="PRO_1000201009" description="UPF0482 protein YnfB">
    <location>
        <begin position="29"/>
        <end position="113"/>
    </location>
</feature>
<comment type="similarity">
    <text evidence="1">Belongs to the UPF0482 family.</text>
</comment>
<evidence type="ECO:0000255" key="1">
    <source>
        <dbReference type="HAMAP-Rule" id="MF_01581"/>
    </source>
</evidence>
<reference key="1">
    <citation type="journal article" date="2009" name="BMC Genomics">
        <title>Pseudogene accumulation in the evolutionary histories of Salmonella enterica serovars Paratyphi A and Typhi.</title>
        <authorList>
            <person name="Holt K.E."/>
            <person name="Thomson N.R."/>
            <person name="Wain J."/>
            <person name="Langridge G.C."/>
            <person name="Hasan R."/>
            <person name="Bhutta Z.A."/>
            <person name="Quail M.A."/>
            <person name="Norbertczak H."/>
            <person name="Walker D."/>
            <person name="Simmonds M."/>
            <person name="White B."/>
            <person name="Bason N."/>
            <person name="Mungall K."/>
            <person name="Dougan G."/>
            <person name="Parkhill J."/>
        </authorList>
    </citation>
    <scope>NUCLEOTIDE SEQUENCE [LARGE SCALE GENOMIC DNA]</scope>
    <source>
        <strain>AKU_12601</strain>
    </source>
</reference>
<sequence length="113" mass="12846">MNNTLSKRLCLTAMLTLAAVVYTTSAFAETSKLVIESGDSAQSRQEAAMEKEQWNDTRSLRQKVNTRAEKEWDKADAAFDNRDKCEQSANINAYWEPNTLRCLDRRTGRVITP</sequence>
<keyword id="KW-0732">Signal</keyword>
<gene>
    <name evidence="1" type="primary">ynfB</name>
    <name type="ordered locus">SSPA1257</name>
</gene>
<accession>B5BK73</accession>